<evidence type="ECO:0000255" key="1">
    <source>
        <dbReference type="HAMAP-Rule" id="MF_00462"/>
    </source>
</evidence>
<protein>
    <recommendedName>
        <fullName evidence="1">Ion-translocating oxidoreductase complex subunit D</fullName>
        <ecNumber evidence="1">7.-.-.-</ecNumber>
    </recommendedName>
    <alternativeName>
        <fullName evidence="1">Rnf electron transport complex subunit D</fullName>
    </alternativeName>
</protein>
<organism>
    <name type="scientific">Shewanella baltica (strain OS195)</name>
    <dbReference type="NCBI Taxonomy" id="399599"/>
    <lineage>
        <taxon>Bacteria</taxon>
        <taxon>Pseudomonadati</taxon>
        <taxon>Pseudomonadota</taxon>
        <taxon>Gammaproteobacteria</taxon>
        <taxon>Alteromonadales</taxon>
        <taxon>Shewanellaceae</taxon>
        <taxon>Shewanella</taxon>
    </lineage>
</organism>
<reference key="1">
    <citation type="submission" date="2007-11" db="EMBL/GenBank/DDBJ databases">
        <title>Complete sequence of chromosome of Shewanella baltica OS195.</title>
        <authorList>
            <consortium name="US DOE Joint Genome Institute"/>
            <person name="Copeland A."/>
            <person name="Lucas S."/>
            <person name="Lapidus A."/>
            <person name="Barry K."/>
            <person name="Glavina del Rio T."/>
            <person name="Dalin E."/>
            <person name="Tice H."/>
            <person name="Pitluck S."/>
            <person name="Chain P."/>
            <person name="Malfatti S."/>
            <person name="Shin M."/>
            <person name="Vergez L."/>
            <person name="Schmutz J."/>
            <person name="Larimer F."/>
            <person name="Land M."/>
            <person name="Hauser L."/>
            <person name="Kyrpides N."/>
            <person name="Kim E."/>
            <person name="Brettar I."/>
            <person name="Rodrigues J."/>
            <person name="Konstantinidis K."/>
            <person name="Klappenbach J."/>
            <person name="Hofle M."/>
            <person name="Tiedje J."/>
            <person name="Richardson P."/>
        </authorList>
    </citation>
    <scope>NUCLEOTIDE SEQUENCE [LARGE SCALE GENOMIC DNA]</scope>
    <source>
        <strain>OS195</strain>
    </source>
</reference>
<name>RNFD_SHEB9</name>
<comment type="function">
    <text evidence="1">Part of a membrane-bound complex that couples electron transfer with translocation of ions across the membrane.</text>
</comment>
<comment type="cofactor">
    <cofactor evidence="1">
        <name>FMN</name>
        <dbReference type="ChEBI" id="CHEBI:58210"/>
    </cofactor>
</comment>
<comment type="subunit">
    <text evidence="1">The complex is composed of six subunits: RnfA, RnfB, RnfC, RnfD, RnfE and RnfG.</text>
</comment>
<comment type="subcellular location">
    <subcellularLocation>
        <location evidence="1">Cell inner membrane</location>
        <topology evidence="1">Multi-pass membrane protein</topology>
    </subcellularLocation>
</comment>
<comment type="similarity">
    <text evidence="1">Belongs to the NqrB/RnfD family.</text>
</comment>
<gene>
    <name evidence="1" type="primary">rnfD</name>
    <name type="ordered locus">Sbal195_2109</name>
</gene>
<keyword id="KW-0997">Cell inner membrane</keyword>
<keyword id="KW-1003">Cell membrane</keyword>
<keyword id="KW-0249">Electron transport</keyword>
<keyword id="KW-0285">Flavoprotein</keyword>
<keyword id="KW-0288">FMN</keyword>
<keyword id="KW-0472">Membrane</keyword>
<keyword id="KW-0597">Phosphoprotein</keyword>
<keyword id="KW-1278">Translocase</keyword>
<keyword id="KW-0812">Transmembrane</keyword>
<keyword id="KW-1133">Transmembrane helix</keyword>
<keyword id="KW-0813">Transport</keyword>
<dbReference type="EC" id="7.-.-.-" evidence="1"/>
<dbReference type="EMBL" id="CP000891">
    <property type="protein sequence ID" value="ABX49278.1"/>
    <property type="molecule type" value="Genomic_DNA"/>
</dbReference>
<dbReference type="SMR" id="A9L0J8"/>
<dbReference type="KEGG" id="sbn:Sbal195_2109"/>
<dbReference type="HOGENOM" id="CLU_042020_0_0_6"/>
<dbReference type="Proteomes" id="UP000000770">
    <property type="component" value="Chromosome"/>
</dbReference>
<dbReference type="GO" id="GO:0005886">
    <property type="term" value="C:plasma membrane"/>
    <property type="evidence" value="ECO:0007669"/>
    <property type="project" value="UniProtKB-SubCell"/>
</dbReference>
<dbReference type="GO" id="GO:0022900">
    <property type="term" value="P:electron transport chain"/>
    <property type="evidence" value="ECO:0007669"/>
    <property type="project" value="UniProtKB-UniRule"/>
</dbReference>
<dbReference type="GO" id="GO:0055085">
    <property type="term" value="P:transmembrane transport"/>
    <property type="evidence" value="ECO:0007669"/>
    <property type="project" value="InterPro"/>
</dbReference>
<dbReference type="HAMAP" id="MF_00462">
    <property type="entry name" value="RsxD_RnfD"/>
    <property type="match status" value="1"/>
</dbReference>
<dbReference type="InterPro" id="IPR004338">
    <property type="entry name" value="NqrB/RnfD"/>
</dbReference>
<dbReference type="InterPro" id="IPR011303">
    <property type="entry name" value="RnfD_bac"/>
</dbReference>
<dbReference type="NCBIfam" id="NF002011">
    <property type="entry name" value="PRK00816.1"/>
    <property type="match status" value="1"/>
</dbReference>
<dbReference type="NCBIfam" id="TIGR01946">
    <property type="entry name" value="rnfD"/>
    <property type="match status" value="1"/>
</dbReference>
<dbReference type="PANTHER" id="PTHR30578">
    <property type="entry name" value="ELECTRON TRANSPORT COMPLEX PROTEIN RNFD"/>
    <property type="match status" value="1"/>
</dbReference>
<dbReference type="PANTHER" id="PTHR30578:SF0">
    <property type="entry name" value="ION-TRANSLOCATING OXIDOREDUCTASE COMPLEX SUBUNIT D"/>
    <property type="match status" value="1"/>
</dbReference>
<dbReference type="Pfam" id="PF03116">
    <property type="entry name" value="NQR2_RnfD_RnfE"/>
    <property type="match status" value="1"/>
</dbReference>
<sequence>MAFKIASSPHVTRNLHTSTVMQRVILCLLPGLVVQCAFFGWGTLVQVLLAILVALSCEAAVMKLRNRNIKASLSDNSAMLTAILIGVAIPPLAPWWMIVMGTAFAIVIVKHLYGGLGHNLFNPAMAAYVLLLVSFPVQMTTWIAPSTVALHSPSLVESLQLIFNVGAHVNMEQFRLGIDGMTMATPLDTLKTDLSMGLTTTESLTKAIFDGSTGVGWFWVNLAYLAGGLVLLKLKAIRWHISTGVLLGLFVASSIGFLLSPDTQASPLMHLFSGATMLAAFFIATDPVTAATSPRGRIIFGALIGVLVYIIRTKGGYPDAFAFAVLLANLCAPFIDYYVRPRTYGHSTS</sequence>
<feature type="chain" id="PRO_1000081155" description="Ion-translocating oxidoreductase complex subunit D">
    <location>
        <begin position="1"/>
        <end position="349"/>
    </location>
</feature>
<feature type="transmembrane region" description="Helical" evidence="1">
    <location>
        <begin position="20"/>
        <end position="42"/>
    </location>
</feature>
<feature type="transmembrane region" description="Helical" evidence="1">
    <location>
        <begin position="77"/>
        <end position="99"/>
    </location>
</feature>
<feature type="transmembrane region" description="Helical" evidence="1">
    <location>
        <begin position="124"/>
        <end position="144"/>
    </location>
</feature>
<feature type="transmembrane region" description="Helical" evidence="1">
    <location>
        <begin position="212"/>
        <end position="232"/>
    </location>
</feature>
<feature type="transmembrane region" description="Helical" evidence="1">
    <location>
        <begin position="239"/>
        <end position="259"/>
    </location>
</feature>
<feature type="transmembrane region" description="Helical" evidence="1">
    <location>
        <begin position="265"/>
        <end position="285"/>
    </location>
</feature>
<feature type="transmembrane region" description="Helical" evidence="1">
    <location>
        <begin position="291"/>
        <end position="311"/>
    </location>
</feature>
<feature type="transmembrane region" description="Helical" evidence="1">
    <location>
        <begin position="315"/>
        <end position="335"/>
    </location>
</feature>
<feature type="modified residue" description="FMN phosphoryl threonine" evidence="1">
    <location>
        <position position="185"/>
    </location>
</feature>
<accession>A9L0J8</accession>
<proteinExistence type="inferred from homology"/>